<evidence type="ECO:0000255" key="1">
    <source>
        <dbReference type="HAMAP-Rule" id="MF_00482"/>
    </source>
</evidence>
<reference key="1">
    <citation type="journal article" date="1986" name="EMBO J.">
        <title>The complete nucleotide sequence of the tobacco chloroplast genome: its gene organization and expression.</title>
        <authorList>
            <person name="Shinozaki K."/>
            <person name="Ohme M."/>
            <person name="Tanaka M."/>
            <person name="Wakasugi T."/>
            <person name="Hayashida N."/>
            <person name="Matsubayashi T."/>
            <person name="Zaita N."/>
            <person name="Chunwongse J."/>
            <person name="Obokata J."/>
            <person name="Yamaguchi-Shinozaki K."/>
            <person name="Ohto C."/>
            <person name="Torazawa K."/>
            <person name="Meng B.-Y."/>
            <person name="Sugita M."/>
            <person name="Deno H."/>
            <person name="Kamogashira T."/>
            <person name="Yamada K."/>
            <person name="Kusuda J."/>
            <person name="Takaiwa F."/>
            <person name="Kato A."/>
            <person name="Tohdoh N."/>
            <person name="Shimada H."/>
            <person name="Sugiura M."/>
        </authorList>
    </citation>
    <scope>NUCLEOTIDE SEQUENCE [LARGE SCALE GENOMIC DNA]</scope>
    <source>
        <strain>cv. Bright Yellow 4</strain>
    </source>
</reference>
<comment type="function">
    <text evidence="1">PsaA and PsaB bind P700, the primary electron donor of photosystem I (PSI), as well as the electron acceptors A0, A1 and FX. PSI is a plastocyanin-ferredoxin oxidoreductase, converting photonic excitation into a charge separation, which transfers an electron from the donor P700 chlorophyll pair to the spectroscopically characterized acceptors A0, A1, FX, FA and FB in turn. Oxidized P700 is reduced on the lumenal side of the thylakoid membrane by plastocyanin.</text>
</comment>
<comment type="catalytic activity">
    <reaction evidence="1">
        <text>reduced [plastocyanin] + hnu + oxidized [2Fe-2S]-[ferredoxin] = oxidized [plastocyanin] + reduced [2Fe-2S]-[ferredoxin]</text>
        <dbReference type="Rhea" id="RHEA:30407"/>
        <dbReference type="Rhea" id="RHEA-COMP:10000"/>
        <dbReference type="Rhea" id="RHEA-COMP:10001"/>
        <dbReference type="Rhea" id="RHEA-COMP:10039"/>
        <dbReference type="Rhea" id="RHEA-COMP:10040"/>
        <dbReference type="ChEBI" id="CHEBI:29036"/>
        <dbReference type="ChEBI" id="CHEBI:30212"/>
        <dbReference type="ChEBI" id="CHEBI:33737"/>
        <dbReference type="ChEBI" id="CHEBI:33738"/>
        <dbReference type="ChEBI" id="CHEBI:49552"/>
        <dbReference type="EC" id="1.97.1.12"/>
    </reaction>
</comment>
<comment type="cofactor">
    <text evidence="1">P700 is a chlorophyll a/chlorophyll a' dimer, A0 is one or more chlorophyll a, A1 is one or both phylloquinones and FX is a shared 4Fe-4S iron-sulfur center.</text>
</comment>
<comment type="subunit">
    <text evidence="1">The PsaA/B heterodimer binds the P700 chlorophyll special pair and subsequent electron acceptors. PSI consists of a core antenna complex that captures photons, and an electron transfer chain that converts photonic excitation into a charge separation. The eukaryotic PSI reaction center is composed of at least 11 subunits.</text>
</comment>
<comment type="subcellular location">
    <subcellularLocation>
        <location evidence="1">Plastid</location>
        <location evidence="1">Chloroplast thylakoid membrane</location>
        <topology evidence="1">Multi-pass membrane protein</topology>
    </subcellularLocation>
</comment>
<comment type="similarity">
    <text evidence="1">Belongs to the PsaA/PsaB family.</text>
</comment>
<dbReference type="EC" id="1.97.1.12" evidence="1"/>
<dbReference type="EMBL" id="Z00044">
    <property type="protein sequence ID" value="CAA77351.1"/>
    <property type="molecule type" value="Genomic_DNA"/>
</dbReference>
<dbReference type="PIR" id="A03466">
    <property type="entry name" value="A2NTP7"/>
</dbReference>
<dbReference type="RefSeq" id="NP_054496.1">
    <property type="nucleotide sequence ID" value="NC_001879.2"/>
</dbReference>
<dbReference type="SMR" id="P06407"/>
<dbReference type="GeneID" id="800418"/>
<dbReference type="KEGG" id="nta:800418"/>
<dbReference type="OMA" id="EQWVADP"/>
<dbReference type="OrthoDB" id="1699083at2759"/>
<dbReference type="Proteomes" id="UP000084051">
    <property type="component" value="Unplaced"/>
</dbReference>
<dbReference type="GO" id="GO:0009535">
    <property type="term" value="C:chloroplast thylakoid membrane"/>
    <property type="evidence" value="ECO:0007669"/>
    <property type="project" value="UniProtKB-SubCell"/>
</dbReference>
<dbReference type="GO" id="GO:0009522">
    <property type="term" value="C:photosystem I"/>
    <property type="evidence" value="ECO:0007669"/>
    <property type="project" value="UniProtKB-KW"/>
</dbReference>
<dbReference type="GO" id="GO:0051539">
    <property type="term" value="F:4 iron, 4 sulfur cluster binding"/>
    <property type="evidence" value="ECO:0007669"/>
    <property type="project" value="UniProtKB-KW"/>
</dbReference>
<dbReference type="GO" id="GO:0016168">
    <property type="term" value="F:chlorophyll binding"/>
    <property type="evidence" value="ECO:0007669"/>
    <property type="project" value="UniProtKB-KW"/>
</dbReference>
<dbReference type="GO" id="GO:0009055">
    <property type="term" value="F:electron transfer activity"/>
    <property type="evidence" value="ECO:0007669"/>
    <property type="project" value="UniProtKB-UniRule"/>
</dbReference>
<dbReference type="GO" id="GO:0000287">
    <property type="term" value="F:magnesium ion binding"/>
    <property type="evidence" value="ECO:0007669"/>
    <property type="project" value="UniProtKB-UniRule"/>
</dbReference>
<dbReference type="GO" id="GO:0016491">
    <property type="term" value="F:oxidoreductase activity"/>
    <property type="evidence" value="ECO:0007669"/>
    <property type="project" value="UniProtKB-KW"/>
</dbReference>
<dbReference type="GO" id="GO:0015979">
    <property type="term" value="P:photosynthesis"/>
    <property type="evidence" value="ECO:0007669"/>
    <property type="project" value="UniProtKB-UniRule"/>
</dbReference>
<dbReference type="FunFam" id="1.20.1130.10:FF:000001">
    <property type="entry name" value="Photosystem I P700 chlorophyll a apoprotein A2"/>
    <property type="match status" value="1"/>
</dbReference>
<dbReference type="Gene3D" id="1.20.1130.10">
    <property type="entry name" value="Photosystem I PsaA/PsaB"/>
    <property type="match status" value="1"/>
</dbReference>
<dbReference type="HAMAP" id="MF_00482">
    <property type="entry name" value="PSI_PsaB"/>
    <property type="match status" value="1"/>
</dbReference>
<dbReference type="InterPro" id="IPR001280">
    <property type="entry name" value="PSI_PsaA/B"/>
</dbReference>
<dbReference type="InterPro" id="IPR020586">
    <property type="entry name" value="PSI_PsaA/B_CS"/>
</dbReference>
<dbReference type="InterPro" id="IPR036408">
    <property type="entry name" value="PSI_PsaA/B_sf"/>
</dbReference>
<dbReference type="InterPro" id="IPR006244">
    <property type="entry name" value="PSI_PsaB"/>
</dbReference>
<dbReference type="NCBIfam" id="TIGR01336">
    <property type="entry name" value="psaB"/>
    <property type="match status" value="1"/>
</dbReference>
<dbReference type="PANTHER" id="PTHR30128">
    <property type="entry name" value="OUTER MEMBRANE PROTEIN, OMPA-RELATED"/>
    <property type="match status" value="1"/>
</dbReference>
<dbReference type="PANTHER" id="PTHR30128:SF19">
    <property type="entry name" value="PHOTOSYSTEM I P700 CHLOROPHYLL A APOPROTEIN A1-RELATED"/>
    <property type="match status" value="1"/>
</dbReference>
<dbReference type="Pfam" id="PF00223">
    <property type="entry name" value="PsaA_PsaB"/>
    <property type="match status" value="1"/>
</dbReference>
<dbReference type="PIRSF" id="PIRSF002905">
    <property type="entry name" value="PSI_A"/>
    <property type="match status" value="1"/>
</dbReference>
<dbReference type="PRINTS" id="PR00257">
    <property type="entry name" value="PHOTSYSPSAAB"/>
</dbReference>
<dbReference type="SUPFAM" id="SSF81558">
    <property type="entry name" value="Photosystem I subunits PsaA/PsaB"/>
    <property type="match status" value="1"/>
</dbReference>
<dbReference type="PROSITE" id="PS00419">
    <property type="entry name" value="PHOTOSYSTEM_I_PSAAB"/>
    <property type="match status" value="1"/>
</dbReference>
<keyword id="KW-0004">4Fe-4S</keyword>
<keyword id="KW-0148">Chlorophyll</keyword>
<keyword id="KW-0150">Chloroplast</keyword>
<keyword id="KW-0157">Chromophore</keyword>
<keyword id="KW-0249">Electron transport</keyword>
<keyword id="KW-0408">Iron</keyword>
<keyword id="KW-0411">Iron-sulfur</keyword>
<keyword id="KW-0460">Magnesium</keyword>
<keyword id="KW-0472">Membrane</keyword>
<keyword id="KW-0479">Metal-binding</keyword>
<keyword id="KW-0560">Oxidoreductase</keyword>
<keyword id="KW-0602">Photosynthesis</keyword>
<keyword id="KW-0603">Photosystem I</keyword>
<keyword id="KW-0934">Plastid</keyword>
<keyword id="KW-1185">Reference proteome</keyword>
<keyword id="KW-0793">Thylakoid</keyword>
<keyword id="KW-0812">Transmembrane</keyword>
<keyword id="KW-1133">Transmembrane helix</keyword>
<keyword id="KW-0813">Transport</keyword>
<feature type="chain" id="PRO_0000088639" description="Photosystem I P700 chlorophyll a apoprotein A2">
    <location>
        <begin position="1"/>
        <end position="734"/>
    </location>
</feature>
<feature type="transmembrane region" description="Helical; Name=I" evidence="1">
    <location>
        <begin position="46"/>
        <end position="69"/>
    </location>
</feature>
<feature type="transmembrane region" description="Helical; Name=II" evidence="1">
    <location>
        <begin position="135"/>
        <end position="158"/>
    </location>
</feature>
<feature type="transmembrane region" description="Helical; Name=III" evidence="1">
    <location>
        <begin position="175"/>
        <end position="199"/>
    </location>
</feature>
<feature type="transmembrane region" description="Helical; Name=IV" evidence="1">
    <location>
        <begin position="273"/>
        <end position="291"/>
    </location>
</feature>
<feature type="transmembrane region" description="Helical; Name=V" evidence="1">
    <location>
        <begin position="330"/>
        <end position="353"/>
    </location>
</feature>
<feature type="transmembrane region" description="Helical; Name=VI" evidence="1">
    <location>
        <begin position="369"/>
        <end position="395"/>
    </location>
</feature>
<feature type="transmembrane region" description="Helical; Name=VII" evidence="1">
    <location>
        <begin position="417"/>
        <end position="439"/>
    </location>
</feature>
<feature type="transmembrane region" description="Helical; Name=VIII" evidence="1">
    <location>
        <begin position="517"/>
        <end position="535"/>
    </location>
</feature>
<feature type="transmembrane region" description="Helical; Name=IX" evidence="1">
    <location>
        <begin position="575"/>
        <end position="596"/>
    </location>
</feature>
<feature type="transmembrane region" description="Helical; Name=X" evidence="1">
    <location>
        <begin position="643"/>
        <end position="665"/>
    </location>
</feature>
<feature type="transmembrane region" description="Helical; Name=XI" evidence="1">
    <location>
        <begin position="707"/>
        <end position="727"/>
    </location>
</feature>
<feature type="binding site" evidence="1">
    <location>
        <position position="559"/>
    </location>
    <ligand>
        <name>[4Fe-4S] cluster</name>
        <dbReference type="ChEBI" id="CHEBI:49883"/>
        <note>ligand shared between dimeric partners</note>
    </ligand>
</feature>
<feature type="binding site" evidence="1">
    <location>
        <position position="568"/>
    </location>
    <ligand>
        <name>[4Fe-4S] cluster</name>
        <dbReference type="ChEBI" id="CHEBI:49883"/>
        <note>ligand shared between dimeric partners</note>
    </ligand>
</feature>
<feature type="binding site" description="axial binding residue" evidence="1">
    <location>
        <position position="654"/>
    </location>
    <ligand>
        <name>chlorophyll a</name>
        <dbReference type="ChEBI" id="CHEBI:58416"/>
        <label>B1</label>
    </ligand>
    <ligandPart>
        <name>Mg</name>
        <dbReference type="ChEBI" id="CHEBI:25107"/>
    </ligandPart>
</feature>
<feature type="binding site" description="axial binding residue" evidence="1">
    <location>
        <position position="662"/>
    </location>
    <ligand>
        <name>chlorophyll a</name>
        <dbReference type="ChEBI" id="CHEBI:58416"/>
        <label>B3</label>
    </ligand>
    <ligandPart>
        <name>Mg</name>
        <dbReference type="ChEBI" id="CHEBI:25107"/>
    </ligandPart>
</feature>
<feature type="binding site" evidence="1">
    <location>
        <position position="670"/>
    </location>
    <ligand>
        <name>chlorophyll a</name>
        <dbReference type="ChEBI" id="CHEBI:58416"/>
        <label>B3</label>
    </ligand>
</feature>
<feature type="binding site" evidence="1">
    <location>
        <position position="671"/>
    </location>
    <ligand>
        <name>phylloquinone</name>
        <dbReference type="ChEBI" id="CHEBI:18067"/>
        <label>B</label>
    </ligand>
</feature>
<geneLocation type="chloroplast"/>
<accession>P06407</accession>
<organism>
    <name type="scientific">Nicotiana tabacum</name>
    <name type="common">Common tobacco</name>
    <dbReference type="NCBI Taxonomy" id="4097"/>
    <lineage>
        <taxon>Eukaryota</taxon>
        <taxon>Viridiplantae</taxon>
        <taxon>Streptophyta</taxon>
        <taxon>Embryophyta</taxon>
        <taxon>Tracheophyta</taxon>
        <taxon>Spermatophyta</taxon>
        <taxon>Magnoliopsida</taxon>
        <taxon>eudicotyledons</taxon>
        <taxon>Gunneridae</taxon>
        <taxon>Pentapetalae</taxon>
        <taxon>asterids</taxon>
        <taxon>lamiids</taxon>
        <taxon>Solanales</taxon>
        <taxon>Solanaceae</taxon>
        <taxon>Nicotianoideae</taxon>
        <taxon>Nicotianeae</taxon>
        <taxon>Nicotiana</taxon>
    </lineage>
</organism>
<protein>
    <recommendedName>
        <fullName evidence="1">Photosystem I P700 chlorophyll a apoprotein A2</fullName>
        <ecNumber evidence="1">1.97.1.12</ecNumber>
    </recommendedName>
    <alternativeName>
        <fullName evidence="1">PSI-B</fullName>
    </alternativeName>
    <alternativeName>
        <fullName evidence="1">PsaB</fullName>
    </alternativeName>
</protein>
<gene>
    <name evidence="1" type="primary">psaB</name>
</gene>
<sequence length="734" mass="82409">MALRFPRFSQGLAQDPTTRRIWFGIATAHDFESHDDITEERLYQNIFASHFGQLAIIFLWTSGNLFHVAWQGNFESWVQDPLHVRPIAHAIWDPHFGQPAVEAFTRGGALGPVNIAYSGVYQWWYTIGLRTNEDLYTGALFLLFLSAISLIAGWLHLQPKWKPSVSWFKNAESRLNHHLSGLFGVSSLAWTGHLVHVAIPASRGEYVRWNNFLDVLPHPQGLGPLFTGQWNLYAQNPDSSSHLFGTAQGAGTAILTLLGGFHPQTQSLWLTDIAHHHLAIAFIFLVAGHMYRTNFGIGHSMKDLLDAHIPPGGRLGRGHKGLYDTINNSLHFQLGLALASLGVITSLVAQHMYSLPAYAFIAQDFTTQAALYTHHQYIAGFIMTGAFAHGAIFFIRDYNPEQNEDNVLARMLEHKEAIISHLSWASLFLGFHTLGLYVHNDVMLAFGTPEKQILIEPIFAQWIQSAHGKTSYGFDVLLSSTSGPAFNAGRSIWLPGWLNAVNENSNSLFLTIGPGDFLVHHAIALGLHTTTLILVKGALDARGSKLMPDKKDFGYSFPCDGPGRGGTCDISAWDAFYLAVFWMLNTIGWVTFYWHWKHITLWQGNVSQFNESSTYLMGWLRDYLWLNSSQLINGYNPFGMNSLSVWAWMFLFGHLVWATGFMFLISWRGYWQELIETLAWAHERTPLANLIRWRDKPVALSIVQARLVGLAHFSVGYIFTYAAFLIASTSGKFG</sequence>
<proteinExistence type="inferred from homology"/>
<name>PSAB_TOBAC</name>